<dbReference type="EC" id="1.4.1.24" evidence="1"/>
<dbReference type="EMBL" id="CP000968">
    <property type="protein sequence ID" value="ACB07846.1"/>
    <property type="molecule type" value="Genomic_DNA"/>
</dbReference>
<dbReference type="RefSeq" id="WP_012309743.1">
    <property type="nucleotide sequence ID" value="NC_010482.1"/>
</dbReference>
<dbReference type="STRING" id="374847.Kcr_1100"/>
<dbReference type="EnsemblBacteria" id="ACB07846">
    <property type="protein sequence ID" value="ACB07846"/>
    <property type="gene ID" value="Kcr_1100"/>
</dbReference>
<dbReference type="GeneID" id="6094377"/>
<dbReference type="KEGG" id="kcr:Kcr_1100"/>
<dbReference type="eggNOG" id="arCOG04353">
    <property type="taxonomic scope" value="Archaea"/>
</dbReference>
<dbReference type="HOGENOM" id="CLU_056379_0_0_2"/>
<dbReference type="InParanoid" id="B1L5W7"/>
<dbReference type="OrthoDB" id="10265at2157"/>
<dbReference type="PhylomeDB" id="B1L5W7"/>
<dbReference type="Proteomes" id="UP000001686">
    <property type="component" value="Chromosome"/>
</dbReference>
<dbReference type="GO" id="GO:0003856">
    <property type="term" value="F:3-dehydroquinate synthase activity"/>
    <property type="evidence" value="ECO:0007669"/>
    <property type="project" value="InterPro"/>
</dbReference>
<dbReference type="GO" id="GO:0102042">
    <property type="term" value="F:dehydroquinate synthase activity"/>
    <property type="evidence" value="ECO:0007669"/>
    <property type="project" value="UniProtKB-EC"/>
</dbReference>
<dbReference type="GO" id="GO:0051287">
    <property type="term" value="F:NAD binding"/>
    <property type="evidence" value="ECO:0007669"/>
    <property type="project" value="UniProtKB-UniRule"/>
</dbReference>
<dbReference type="GO" id="GO:0008652">
    <property type="term" value="P:amino acid biosynthetic process"/>
    <property type="evidence" value="ECO:0007669"/>
    <property type="project" value="UniProtKB-KW"/>
</dbReference>
<dbReference type="GO" id="GO:0009073">
    <property type="term" value="P:aromatic amino acid family biosynthetic process"/>
    <property type="evidence" value="ECO:0007669"/>
    <property type="project" value="UniProtKB-UniRule"/>
</dbReference>
<dbReference type="HAMAP" id="MF_01244">
    <property type="entry name" value="Arch_DHQ_synthase"/>
    <property type="match status" value="1"/>
</dbReference>
<dbReference type="InterPro" id="IPR002812">
    <property type="entry name" value="DHQ_synth"/>
</dbReference>
<dbReference type="PANTHER" id="PTHR33563">
    <property type="match status" value="1"/>
</dbReference>
<dbReference type="PANTHER" id="PTHR33563:SF1">
    <property type="entry name" value="3-DEHYDROQUINATE SYNTHASE"/>
    <property type="match status" value="1"/>
</dbReference>
<dbReference type="Pfam" id="PF01959">
    <property type="entry name" value="DHQS"/>
    <property type="match status" value="1"/>
</dbReference>
<keyword id="KW-0028">Amino-acid biosynthesis</keyword>
<keyword id="KW-0057">Aromatic amino acid biosynthesis</keyword>
<keyword id="KW-0520">NAD</keyword>
<keyword id="KW-0560">Oxidoreductase</keyword>
<keyword id="KW-1185">Reference proteome</keyword>
<organism>
    <name type="scientific">Korarchaeum cryptofilum (strain OPF8)</name>
    <dbReference type="NCBI Taxonomy" id="374847"/>
    <lineage>
        <taxon>Archaea</taxon>
        <taxon>Thermoproteota</taxon>
        <taxon>Candidatus Korarchaeia</taxon>
        <taxon>Candidatus Korarchaeales</taxon>
        <taxon>Candidatus Korarchaeaceae</taxon>
        <taxon>Candidatus Korarchaeum</taxon>
    </lineage>
</organism>
<feature type="chain" id="PRO_0000372046" description="3-dehydroquinate synthase">
    <location>
        <begin position="1"/>
        <end position="334"/>
    </location>
</feature>
<protein>
    <recommendedName>
        <fullName evidence="1">3-dehydroquinate synthase</fullName>
        <shortName evidence="1">DHQ synthase</shortName>
        <ecNumber evidence="1">1.4.1.24</ecNumber>
    </recommendedName>
    <alternativeName>
        <fullName evidence="1">3-dehydroquinate synthase II</fullName>
    </alternativeName>
</protein>
<name>DHQS_KORCO</name>
<reference key="1">
    <citation type="journal article" date="2008" name="Proc. Natl. Acad. Sci. U.S.A.">
        <title>A korarchaeal genome reveals new insights into the evolution of the Archaea.</title>
        <authorList>
            <person name="Elkins J.G."/>
            <person name="Podar M."/>
            <person name="Graham D.E."/>
            <person name="Makarova K.S."/>
            <person name="Wolf Y."/>
            <person name="Randau L."/>
            <person name="Hedlund B.P."/>
            <person name="Brochier-Armanet C."/>
            <person name="Kunin V."/>
            <person name="Anderson I."/>
            <person name="Lapidus A."/>
            <person name="Goltsman E."/>
            <person name="Barry K."/>
            <person name="Koonin E.V."/>
            <person name="Hugenholtz P."/>
            <person name="Kyrpides N."/>
            <person name="Wanner G."/>
            <person name="Richardson P."/>
            <person name="Keller M."/>
            <person name="Stetter K.O."/>
        </authorList>
    </citation>
    <scope>NUCLEOTIDE SEQUENCE [LARGE SCALE GENOMIC DNA]</scope>
    <source>
        <strain>OPF8</strain>
    </source>
</reference>
<comment type="function">
    <text evidence="1">Catalyzes the oxidative deamination and cyclization of 2-amino-3,7-dideoxy-D-threo-hept-6-ulosonic acid (ADH) to yield 3-dehydroquinate (DHQ), which is fed into the canonical shikimic pathway of aromatic amino acid biosynthesis.</text>
</comment>
<comment type="catalytic activity">
    <reaction evidence="1">
        <text>2-amino-2,3,7-trideoxy-D-lyxo-hept-6-ulosonate + NAD(+) + H2O = 3-dehydroquinate + NH4(+) + NADH + H(+)</text>
        <dbReference type="Rhea" id="RHEA:25956"/>
        <dbReference type="ChEBI" id="CHEBI:15377"/>
        <dbReference type="ChEBI" id="CHEBI:15378"/>
        <dbReference type="ChEBI" id="CHEBI:28938"/>
        <dbReference type="ChEBI" id="CHEBI:32364"/>
        <dbReference type="ChEBI" id="CHEBI:57540"/>
        <dbReference type="ChEBI" id="CHEBI:57945"/>
        <dbReference type="ChEBI" id="CHEBI:58859"/>
        <dbReference type="EC" id="1.4.1.24"/>
    </reaction>
</comment>
<comment type="similarity">
    <text evidence="1">Belongs to the archaeal-type DHQ synthase family.</text>
</comment>
<evidence type="ECO:0000255" key="1">
    <source>
        <dbReference type="HAMAP-Rule" id="MF_01244"/>
    </source>
</evidence>
<proteinExistence type="inferred from homology"/>
<gene>
    <name evidence="1" type="primary">aroB'</name>
    <name type="ordered locus">Kcr_1100</name>
</gene>
<accession>B1L5W7</accession>
<sequence length="334" mass="36633">MRSKELIILADSSPDSVVEKAIKMGLKVAAVDQSVKERLKGYLDPSLIVEVSEWPSEGELTLFKIRGPEDVEILRREANERKFLIESESWKIIPLENIIAEVGGERIYAIADDLEEARSLLGVLEIGVKGVVIPIKDSAQLERALRLSEEVNPLNLREARVTEVKQVGMGDRVCVDTTSILSKGEGMLVGGSASFLFLVHSENIESPFTSPREFRVNAGAVSNYLLAPGGKTLYLSEVRAGSEVLAVSVDGRRRAVSVGRAKVERRPMVLVRASSDGEEGWTVLQLAETIPLVKPDGSTVAVTDLKPGDRVLVYVSERKARHFGTAVDEFIEER</sequence>